<reference key="1">
    <citation type="journal article" date="2000" name="Science">
        <title>The genome sequence of Drosophila melanogaster.</title>
        <authorList>
            <person name="Adams M.D."/>
            <person name="Celniker S.E."/>
            <person name="Holt R.A."/>
            <person name="Evans C.A."/>
            <person name="Gocayne J.D."/>
            <person name="Amanatides P.G."/>
            <person name="Scherer S.E."/>
            <person name="Li P.W."/>
            <person name="Hoskins R.A."/>
            <person name="Galle R.F."/>
            <person name="George R.A."/>
            <person name="Lewis S.E."/>
            <person name="Richards S."/>
            <person name="Ashburner M."/>
            <person name="Henderson S.N."/>
            <person name="Sutton G.G."/>
            <person name="Wortman J.R."/>
            <person name="Yandell M.D."/>
            <person name="Zhang Q."/>
            <person name="Chen L.X."/>
            <person name="Brandon R.C."/>
            <person name="Rogers Y.-H.C."/>
            <person name="Blazej R.G."/>
            <person name="Champe M."/>
            <person name="Pfeiffer B.D."/>
            <person name="Wan K.H."/>
            <person name="Doyle C."/>
            <person name="Baxter E.G."/>
            <person name="Helt G."/>
            <person name="Nelson C.R."/>
            <person name="Miklos G.L.G."/>
            <person name="Abril J.F."/>
            <person name="Agbayani A."/>
            <person name="An H.-J."/>
            <person name="Andrews-Pfannkoch C."/>
            <person name="Baldwin D."/>
            <person name="Ballew R.M."/>
            <person name="Basu A."/>
            <person name="Baxendale J."/>
            <person name="Bayraktaroglu L."/>
            <person name="Beasley E.M."/>
            <person name="Beeson K.Y."/>
            <person name="Benos P.V."/>
            <person name="Berman B.P."/>
            <person name="Bhandari D."/>
            <person name="Bolshakov S."/>
            <person name="Borkova D."/>
            <person name="Botchan M.R."/>
            <person name="Bouck J."/>
            <person name="Brokstein P."/>
            <person name="Brottier P."/>
            <person name="Burtis K.C."/>
            <person name="Busam D.A."/>
            <person name="Butler H."/>
            <person name="Cadieu E."/>
            <person name="Center A."/>
            <person name="Chandra I."/>
            <person name="Cherry J.M."/>
            <person name="Cawley S."/>
            <person name="Dahlke C."/>
            <person name="Davenport L.B."/>
            <person name="Davies P."/>
            <person name="de Pablos B."/>
            <person name="Delcher A."/>
            <person name="Deng Z."/>
            <person name="Mays A.D."/>
            <person name="Dew I."/>
            <person name="Dietz S.M."/>
            <person name="Dodson K."/>
            <person name="Doup L.E."/>
            <person name="Downes M."/>
            <person name="Dugan-Rocha S."/>
            <person name="Dunkov B.C."/>
            <person name="Dunn P."/>
            <person name="Durbin K.J."/>
            <person name="Evangelista C.C."/>
            <person name="Ferraz C."/>
            <person name="Ferriera S."/>
            <person name="Fleischmann W."/>
            <person name="Fosler C."/>
            <person name="Gabrielian A.E."/>
            <person name="Garg N.S."/>
            <person name="Gelbart W.M."/>
            <person name="Glasser K."/>
            <person name="Glodek A."/>
            <person name="Gong F."/>
            <person name="Gorrell J.H."/>
            <person name="Gu Z."/>
            <person name="Guan P."/>
            <person name="Harris M."/>
            <person name="Harris N.L."/>
            <person name="Harvey D.A."/>
            <person name="Heiman T.J."/>
            <person name="Hernandez J.R."/>
            <person name="Houck J."/>
            <person name="Hostin D."/>
            <person name="Houston K.A."/>
            <person name="Howland T.J."/>
            <person name="Wei M.-H."/>
            <person name="Ibegwam C."/>
            <person name="Jalali M."/>
            <person name="Kalush F."/>
            <person name="Karpen G.H."/>
            <person name="Ke Z."/>
            <person name="Kennison J.A."/>
            <person name="Ketchum K.A."/>
            <person name="Kimmel B.E."/>
            <person name="Kodira C.D."/>
            <person name="Kraft C.L."/>
            <person name="Kravitz S."/>
            <person name="Kulp D."/>
            <person name="Lai Z."/>
            <person name="Lasko P."/>
            <person name="Lei Y."/>
            <person name="Levitsky A.A."/>
            <person name="Li J.H."/>
            <person name="Li Z."/>
            <person name="Liang Y."/>
            <person name="Lin X."/>
            <person name="Liu X."/>
            <person name="Mattei B."/>
            <person name="McIntosh T.C."/>
            <person name="McLeod M.P."/>
            <person name="McPherson D."/>
            <person name="Merkulov G."/>
            <person name="Milshina N.V."/>
            <person name="Mobarry C."/>
            <person name="Morris J."/>
            <person name="Moshrefi A."/>
            <person name="Mount S.M."/>
            <person name="Moy M."/>
            <person name="Murphy B."/>
            <person name="Murphy L."/>
            <person name="Muzny D.M."/>
            <person name="Nelson D.L."/>
            <person name="Nelson D.R."/>
            <person name="Nelson K.A."/>
            <person name="Nixon K."/>
            <person name="Nusskern D.R."/>
            <person name="Pacleb J.M."/>
            <person name="Palazzolo M."/>
            <person name="Pittman G.S."/>
            <person name="Pan S."/>
            <person name="Pollard J."/>
            <person name="Puri V."/>
            <person name="Reese M.G."/>
            <person name="Reinert K."/>
            <person name="Remington K."/>
            <person name="Saunders R.D.C."/>
            <person name="Scheeler F."/>
            <person name="Shen H."/>
            <person name="Shue B.C."/>
            <person name="Siden-Kiamos I."/>
            <person name="Simpson M."/>
            <person name="Skupski M.P."/>
            <person name="Smith T.J."/>
            <person name="Spier E."/>
            <person name="Spradling A.C."/>
            <person name="Stapleton M."/>
            <person name="Strong R."/>
            <person name="Sun E."/>
            <person name="Svirskas R."/>
            <person name="Tector C."/>
            <person name="Turner R."/>
            <person name="Venter E."/>
            <person name="Wang A.H."/>
            <person name="Wang X."/>
            <person name="Wang Z.-Y."/>
            <person name="Wassarman D.A."/>
            <person name="Weinstock G.M."/>
            <person name="Weissenbach J."/>
            <person name="Williams S.M."/>
            <person name="Woodage T."/>
            <person name="Worley K.C."/>
            <person name="Wu D."/>
            <person name="Yang S."/>
            <person name="Yao Q.A."/>
            <person name="Ye J."/>
            <person name="Yeh R.-F."/>
            <person name="Zaveri J.S."/>
            <person name="Zhan M."/>
            <person name="Zhang G."/>
            <person name="Zhao Q."/>
            <person name="Zheng L."/>
            <person name="Zheng X.H."/>
            <person name="Zhong F.N."/>
            <person name="Zhong W."/>
            <person name="Zhou X."/>
            <person name="Zhu S.C."/>
            <person name="Zhu X."/>
            <person name="Smith H.O."/>
            <person name="Gibbs R.A."/>
            <person name="Myers E.W."/>
            <person name="Rubin G.M."/>
            <person name="Venter J.C."/>
        </authorList>
    </citation>
    <scope>NUCLEOTIDE SEQUENCE [LARGE SCALE GENOMIC DNA]</scope>
    <source>
        <strain>Berkeley</strain>
    </source>
</reference>
<reference key="2">
    <citation type="journal article" date="2002" name="Genome Biol.">
        <title>Annotation of the Drosophila melanogaster euchromatic genome: a systematic review.</title>
        <authorList>
            <person name="Misra S."/>
            <person name="Crosby M.A."/>
            <person name="Mungall C.J."/>
            <person name="Matthews B.B."/>
            <person name="Campbell K.S."/>
            <person name="Hradecky P."/>
            <person name="Huang Y."/>
            <person name="Kaminker J.S."/>
            <person name="Millburn G.H."/>
            <person name="Prochnik S.E."/>
            <person name="Smith C.D."/>
            <person name="Tupy J.L."/>
            <person name="Whitfield E.J."/>
            <person name="Bayraktaroglu L."/>
            <person name="Berman B.P."/>
            <person name="Bettencourt B.R."/>
            <person name="Celniker S.E."/>
            <person name="de Grey A.D.N.J."/>
            <person name="Drysdale R.A."/>
            <person name="Harris N.L."/>
            <person name="Richter J."/>
            <person name="Russo S."/>
            <person name="Schroeder A.J."/>
            <person name="Shu S.Q."/>
            <person name="Stapleton M."/>
            <person name="Yamada C."/>
            <person name="Ashburner M."/>
            <person name="Gelbart W.M."/>
            <person name="Rubin G.M."/>
            <person name="Lewis S.E."/>
        </authorList>
    </citation>
    <scope>GENOME REANNOTATION</scope>
    <source>
        <strain>Berkeley</strain>
    </source>
</reference>
<reference key="3">
    <citation type="journal article" date="2002" name="Genome Biol.">
        <title>A Drosophila full-length cDNA resource.</title>
        <authorList>
            <person name="Stapleton M."/>
            <person name="Carlson J.W."/>
            <person name="Brokstein P."/>
            <person name="Yu C."/>
            <person name="Champe M."/>
            <person name="George R.A."/>
            <person name="Guarin H."/>
            <person name="Kronmiller B."/>
            <person name="Pacleb J.M."/>
            <person name="Park S."/>
            <person name="Wan K.H."/>
            <person name="Rubin G.M."/>
            <person name="Celniker S.E."/>
        </authorList>
    </citation>
    <scope>NUCLEOTIDE SEQUENCE [LARGE SCALE MRNA] (ISOFORM A)</scope>
    <source>
        <strain>Berkeley</strain>
        <tissue>Embryo</tissue>
    </source>
</reference>
<name>NARF_DROME</name>
<organism>
    <name type="scientific">Drosophila melanogaster</name>
    <name type="common">Fruit fly</name>
    <dbReference type="NCBI Taxonomy" id="7227"/>
    <lineage>
        <taxon>Eukaryota</taxon>
        <taxon>Metazoa</taxon>
        <taxon>Ecdysozoa</taxon>
        <taxon>Arthropoda</taxon>
        <taxon>Hexapoda</taxon>
        <taxon>Insecta</taxon>
        <taxon>Pterygota</taxon>
        <taxon>Neoptera</taxon>
        <taxon>Endopterygota</taxon>
        <taxon>Diptera</taxon>
        <taxon>Brachycera</taxon>
        <taxon>Muscomorpha</taxon>
        <taxon>Ephydroidea</taxon>
        <taxon>Drosophilidae</taxon>
        <taxon>Drosophila</taxon>
        <taxon>Sophophora</taxon>
    </lineage>
</organism>
<gene>
    <name type="ORF">CG17683</name>
</gene>
<comment type="function">
    <text evidence="1">Component of the cytosolic iron-sulfur (Fe/S) protein assembly machinery. Required for maturation of extramitochondrial Fe/S proteins (By similarity).</text>
</comment>
<comment type="alternative products">
    <event type="alternative splicing"/>
    <isoform>
        <id>Q8SYS7-1</id>
        <name>A</name>
        <sequence type="displayed"/>
    </isoform>
    <isoform>
        <id>Q8SYS7-2</id>
        <name>C</name>
        <sequence type="described" ref="VSP_038042"/>
    </isoform>
    <isoform>
        <id>Q8SYS7-3</id>
        <name>E</name>
        <sequence type="described" ref="VSP_038040"/>
    </isoform>
    <isoform>
        <id>Q8SYS7-4</id>
        <name>D</name>
        <sequence type="described" ref="VSP_038041 VSP_038043"/>
    </isoform>
</comment>
<comment type="similarity">
    <text evidence="3">Belongs to the NARF family.</text>
</comment>
<proteinExistence type="evidence at transcript level"/>
<protein>
    <recommendedName>
        <fullName>Probable cytosolic Fe-S cluster assembly factor CG17683</fullName>
    </recommendedName>
</protein>
<evidence type="ECO:0000250" key="1"/>
<evidence type="ECO:0000255" key="2"/>
<evidence type="ECO:0000305" key="3"/>
<keyword id="KW-0004">4Fe-4S</keyword>
<keyword id="KW-0025">Alternative splicing</keyword>
<keyword id="KW-0408">Iron</keyword>
<keyword id="KW-0411">Iron-sulfur</keyword>
<keyword id="KW-0479">Metal-binding</keyword>
<keyword id="KW-1185">Reference proteome</keyword>
<dbReference type="EMBL" id="AE013599">
    <property type="protein sequence ID" value="EAA46161.1"/>
    <property type="molecule type" value="Genomic_DNA"/>
</dbReference>
<dbReference type="EMBL" id="AE013599">
    <property type="protein sequence ID" value="EAL24588.1"/>
    <property type="molecule type" value="Genomic_DNA"/>
</dbReference>
<dbReference type="EMBL" id="AE013599">
    <property type="protein sequence ID" value="EAL24589.1"/>
    <property type="molecule type" value="Genomic_DNA"/>
</dbReference>
<dbReference type="EMBL" id="AE013599">
    <property type="protein sequence ID" value="EAL24590.1"/>
    <property type="molecule type" value="Genomic_DNA"/>
</dbReference>
<dbReference type="EMBL" id="AY071338">
    <property type="protein sequence ID" value="AAL48960.1"/>
    <property type="molecule type" value="mRNA"/>
</dbReference>
<dbReference type="RefSeq" id="NP_001036427.1">
    <molecule id="Q8SYS7-3"/>
    <property type="nucleotide sequence ID" value="NM_001042962.2"/>
</dbReference>
<dbReference type="RefSeq" id="NP_001036428.1">
    <molecule id="Q8SYS7-1"/>
    <property type="nucleotide sequence ID" value="NM_001042963.2"/>
</dbReference>
<dbReference type="RefSeq" id="NP_001036429.1">
    <molecule id="Q8SYS7-4"/>
    <property type="nucleotide sequence ID" value="NM_001042964.2"/>
</dbReference>
<dbReference type="RefSeq" id="NP_001036430.1">
    <molecule id="Q8SYS7-2"/>
    <property type="nucleotide sequence ID" value="NM_001042965.2"/>
</dbReference>
<dbReference type="SMR" id="Q8SYS7"/>
<dbReference type="BioGRID" id="78136">
    <property type="interactions" value="1"/>
</dbReference>
<dbReference type="FunCoup" id="Q8SYS7">
    <property type="interactions" value="499"/>
</dbReference>
<dbReference type="IntAct" id="Q8SYS7">
    <property type="interactions" value="3"/>
</dbReference>
<dbReference type="STRING" id="7227.FBpp0110523"/>
<dbReference type="GlyGen" id="Q8SYS7">
    <property type="glycosylation" value="1 site"/>
</dbReference>
<dbReference type="PaxDb" id="7227-FBpp0110523"/>
<dbReference type="DNASU" id="3355011"/>
<dbReference type="EnsemblMetazoa" id="FBtr0111298">
    <molecule id="Q8SYS7-1"/>
    <property type="protein sequence ID" value="FBpp0110523"/>
    <property type="gene ID" value="FBgn0262115"/>
</dbReference>
<dbReference type="EnsemblMetazoa" id="FBtr0111299">
    <molecule id="Q8SYS7-2"/>
    <property type="protein sequence ID" value="FBpp0110563"/>
    <property type="gene ID" value="FBgn0262115"/>
</dbReference>
<dbReference type="EnsemblMetazoa" id="FBtr0111300">
    <molecule id="Q8SYS7-4"/>
    <property type="protein sequence ID" value="FBpp0110581"/>
    <property type="gene ID" value="FBgn0262115"/>
</dbReference>
<dbReference type="EnsemblMetazoa" id="FBtr0111301">
    <molecule id="Q8SYS7-3"/>
    <property type="protein sequence ID" value="FBpp0110483"/>
    <property type="gene ID" value="FBgn0262115"/>
</dbReference>
<dbReference type="GeneID" id="3355011"/>
<dbReference type="KEGG" id="dme:Dmel_CG17683"/>
<dbReference type="UCSC" id="CG17683-RA">
    <molecule id="Q8SYS7-1"/>
    <property type="organism name" value="d. melanogaster"/>
</dbReference>
<dbReference type="UCSC" id="CG17683-RB">
    <property type="organism name" value="d. melanogaster"/>
</dbReference>
<dbReference type="UCSC" id="CG17683-RC">
    <property type="organism name" value="d. melanogaster"/>
</dbReference>
<dbReference type="UCSC" id="CG17683-RE">
    <property type="organism name" value="d. melanogaster"/>
</dbReference>
<dbReference type="AGR" id="FB:FBgn0262115"/>
<dbReference type="FlyBase" id="FBgn0262115">
    <property type="gene designation" value="CG17683"/>
</dbReference>
<dbReference type="VEuPathDB" id="VectorBase:FBgn0262115"/>
<dbReference type="eggNOG" id="KOG2439">
    <property type="taxonomic scope" value="Eukaryota"/>
</dbReference>
<dbReference type="GeneTree" id="ENSGT00940000153514"/>
<dbReference type="InParanoid" id="Q8SYS7"/>
<dbReference type="OMA" id="GYLHHVL"/>
<dbReference type="OrthoDB" id="10253113at2759"/>
<dbReference type="PhylomeDB" id="Q8SYS7"/>
<dbReference type="BioGRID-ORCS" id="3355011">
    <property type="hits" value="1 hit in 3 CRISPR screens"/>
</dbReference>
<dbReference type="GenomeRNAi" id="3355011"/>
<dbReference type="PRO" id="PR:Q8SYS7"/>
<dbReference type="Proteomes" id="UP000000803">
    <property type="component" value="Chromosome 2R"/>
</dbReference>
<dbReference type="Bgee" id="FBgn0262115">
    <property type="expression patterns" value="Expressed in posterior terminal follicle cell in ovary and 260 other cell types or tissues"/>
</dbReference>
<dbReference type="ExpressionAtlas" id="Q8SYS7">
    <property type="expression patterns" value="baseline and differential"/>
</dbReference>
<dbReference type="GO" id="GO:0097361">
    <property type="term" value="C:cytosolic [4Fe-4S] assembly targeting complex"/>
    <property type="evidence" value="ECO:0000318"/>
    <property type="project" value="GO_Central"/>
</dbReference>
<dbReference type="GO" id="GO:0051539">
    <property type="term" value="F:4 iron, 4 sulfur cluster binding"/>
    <property type="evidence" value="ECO:0007669"/>
    <property type="project" value="UniProtKB-KW"/>
</dbReference>
<dbReference type="GO" id="GO:0046872">
    <property type="term" value="F:metal ion binding"/>
    <property type="evidence" value="ECO:0007669"/>
    <property type="project" value="UniProtKB-KW"/>
</dbReference>
<dbReference type="GO" id="GO:0016226">
    <property type="term" value="P:iron-sulfur cluster assembly"/>
    <property type="evidence" value="ECO:0000250"/>
    <property type="project" value="UniProtKB"/>
</dbReference>
<dbReference type="FunFam" id="3.30.70.20:FF:000042">
    <property type="entry name" value="Cytosolic Fe-S cluster assembly factor NAR1"/>
    <property type="match status" value="1"/>
</dbReference>
<dbReference type="Gene3D" id="3.40.50.1780">
    <property type="match status" value="1"/>
</dbReference>
<dbReference type="Gene3D" id="3.40.950.10">
    <property type="entry name" value="Fe-only Hydrogenase (Larger Subunit), Chain L, domain 3"/>
    <property type="match status" value="1"/>
</dbReference>
<dbReference type="InterPro" id="IPR050340">
    <property type="entry name" value="Cytosolic_Fe-S_CAF"/>
</dbReference>
<dbReference type="InterPro" id="IPR009016">
    <property type="entry name" value="Fe_hydrogenase"/>
</dbReference>
<dbReference type="InterPro" id="IPR004108">
    <property type="entry name" value="Fe_hydrogenase_lsu_C"/>
</dbReference>
<dbReference type="InterPro" id="IPR003149">
    <property type="entry name" value="Fe_hydrogenase_ssu"/>
</dbReference>
<dbReference type="PANTHER" id="PTHR11615">
    <property type="entry name" value="NITRATE, FORMATE, IRON DEHYDROGENASE"/>
    <property type="match status" value="1"/>
</dbReference>
<dbReference type="Pfam" id="PF02906">
    <property type="entry name" value="Fe_hyd_lg_C"/>
    <property type="match status" value="1"/>
</dbReference>
<dbReference type="Pfam" id="PF02256">
    <property type="entry name" value="Fe_hyd_SSU"/>
    <property type="match status" value="1"/>
</dbReference>
<dbReference type="SMART" id="SM00902">
    <property type="entry name" value="Fe_hyd_SSU"/>
    <property type="match status" value="1"/>
</dbReference>
<dbReference type="SUPFAM" id="SSF53920">
    <property type="entry name" value="Fe-only hydrogenase"/>
    <property type="match status" value="1"/>
</dbReference>
<feature type="chain" id="PRO_0000383702" description="Probable cytosolic Fe-S cluster assembly factor CG17683">
    <location>
        <begin position="1"/>
        <end position="477"/>
    </location>
</feature>
<feature type="binding site" evidence="2">
    <location>
        <position position="23"/>
    </location>
    <ligand>
        <name>[4Fe-4S] cluster</name>
        <dbReference type="ChEBI" id="CHEBI:49883"/>
        <label>1</label>
    </ligand>
</feature>
<feature type="binding site" evidence="2">
    <location>
        <position position="68"/>
    </location>
    <ligand>
        <name>[4Fe-4S] cluster</name>
        <dbReference type="ChEBI" id="CHEBI:49883"/>
        <label>1</label>
    </ligand>
</feature>
<feature type="binding site" evidence="2">
    <location>
        <position position="71"/>
    </location>
    <ligand>
        <name>[4Fe-4S] cluster</name>
        <dbReference type="ChEBI" id="CHEBI:49883"/>
        <label>1</label>
    </ligand>
</feature>
<feature type="binding site" evidence="2">
    <location>
        <position position="74"/>
    </location>
    <ligand>
        <name>[4Fe-4S] cluster</name>
        <dbReference type="ChEBI" id="CHEBI:49883"/>
        <label>1</label>
    </ligand>
</feature>
<feature type="binding site" evidence="2">
    <location>
        <position position="187"/>
    </location>
    <ligand>
        <name>[4Fe-4S] cluster</name>
        <dbReference type="ChEBI" id="CHEBI:49883"/>
        <label>2</label>
    </ligand>
</feature>
<feature type="binding site" evidence="2">
    <location>
        <position position="243"/>
    </location>
    <ligand>
        <name>[4Fe-4S] cluster</name>
        <dbReference type="ChEBI" id="CHEBI:49883"/>
        <label>2</label>
    </ligand>
</feature>
<feature type="binding site" evidence="2">
    <location>
        <position position="395"/>
    </location>
    <ligand>
        <name>[4Fe-4S] cluster</name>
        <dbReference type="ChEBI" id="CHEBI:49883"/>
        <label>2</label>
    </ligand>
</feature>
<feature type="binding site" evidence="2">
    <location>
        <position position="399"/>
    </location>
    <ligand>
        <name>[4Fe-4S] cluster</name>
        <dbReference type="ChEBI" id="CHEBI:49883"/>
        <label>2</label>
    </ligand>
</feature>
<feature type="splice variant" id="VSP_038040" description="In isoform E." evidence="3">
    <location>
        <begin position="1"/>
        <end position="181"/>
    </location>
</feature>
<feature type="splice variant" id="VSP_038041" description="In isoform D." evidence="3">
    <location>
        <begin position="1"/>
        <end position="47"/>
    </location>
</feature>
<feature type="splice variant" id="VSP_038042" description="In isoform C." evidence="3">
    <location>
        <begin position="22"/>
        <end position="25"/>
    </location>
</feature>
<feature type="splice variant" id="VSP_038043" description="In isoform D." evidence="3">
    <original>FEESE</original>
    <variation>MVSLQ</variation>
    <location>
        <begin position="48"/>
        <end position="52"/>
    </location>
</feature>
<accession>Q8SYS7</accession>
<accession>Q5LJW9</accession>
<accession>Q5LJX0</accession>
<accession>Q7PLS3</accession>
<sequence length="477" mass="54534">MSRLSRALQLTDIDDFITPSQICIKPVQIDKARSKTGAKIKIKGDGCFEESESGNLKLNKVDISLQDCLACSGCITSAEEVLITQQSREELLKVLQENSKNKASEDWDNVRTIVFTLATQPILSLAYRYQIGVEDAARHLNGYFRSLGADYVLSTKVADDIALLECRQEFVDRYRENENLTMLSSSCPGWVCYAEKTHGNFLLPYVSTTRSPQQIMGVLVKQILADKMNVPASRIYHVTVMPCYDKKLEASREDFFSKANNSRDVDCVITSVEVEQLLSEAQQPLSQYDLLDLDWPWSNVRPEFMVWAHEKTLSGGYAEHIFKYAAKHIFNEDLKTELEFKQLKNRDFREIILKQNGKTVLKFAIANGFRNIQNLVQKLKREKVSNYHFVEVMACPSGCINGGAQIRPTTGQHVRELTRKLEELYQNLPRSEPENSLTKHIYNDFLDGFQSDKSYDVLHTRYHDVVSELSISLNINW</sequence>